<organism>
    <name type="scientific">Leptospira biflexa serovar Patoc (strain Patoc 1 / ATCC 23582 / Paris)</name>
    <dbReference type="NCBI Taxonomy" id="456481"/>
    <lineage>
        <taxon>Bacteria</taxon>
        <taxon>Pseudomonadati</taxon>
        <taxon>Spirochaetota</taxon>
        <taxon>Spirochaetia</taxon>
        <taxon>Leptospirales</taxon>
        <taxon>Leptospiraceae</taxon>
        <taxon>Leptospira</taxon>
    </lineage>
</organism>
<feature type="chain" id="PRO_1000134171" description="ATP synthase gamma chain">
    <location>
        <begin position="1"/>
        <end position="289"/>
    </location>
</feature>
<name>ATPG_LEPBP</name>
<comment type="function">
    <text evidence="1">Produces ATP from ADP in the presence of a proton gradient across the membrane. The gamma chain is believed to be important in regulating ATPase activity and the flow of protons through the CF(0) complex.</text>
</comment>
<comment type="subunit">
    <text evidence="1">F-type ATPases have 2 components, CF(1) - the catalytic core - and CF(0) - the membrane proton channel. CF(1) has five subunits: alpha(3), beta(3), gamma(1), delta(1), epsilon(1). CF(0) has three main subunits: a, b and c.</text>
</comment>
<comment type="subcellular location">
    <subcellularLocation>
        <location evidence="1">Cell inner membrane</location>
        <topology evidence="1">Peripheral membrane protein</topology>
    </subcellularLocation>
</comment>
<comment type="similarity">
    <text evidence="1">Belongs to the ATPase gamma chain family.</text>
</comment>
<reference key="1">
    <citation type="journal article" date="2008" name="PLoS ONE">
        <title>Genome sequence of the saprophyte Leptospira biflexa provides insights into the evolution of Leptospira and the pathogenesis of leptospirosis.</title>
        <authorList>
            <person name="Picardeau M."/>
            <person name="Bulach D.M."/>
            <person name="Bouchier C."/>
            <person name="Zuerner R.L."/>
            <person name="Zidane N."/>
            <person name="Wilson P.J."/>
            <person name="Creno S."/>
            <person name="Kuczek E.S."/>
            <person name="Bommezzadri S."/>
            <person name="Davis J.C."/>
            <person name="McGrath A."/>
            <person name="Johnson M.J."/>
            <person name="Boursaux-Eude C."/>
            <person name="Seemann T."/>
            <person name="Rouy Z."/>
            <person name="Coppel R.L."/>
            <person name="Rood J.I."/>
            <person name="Lajus A."/>
            <person name="Davies J.K."/>
            <person name="Medigue C."/>
            <person name="Adler B."/>
        </authorList>
    </citation>
    <scope>NUCLEOTIDE SEQUENCE [LARGE SCALE GENOMIC DNA]</scope>
    <source>
        <strain>Patoc 1 / ATCC 23582 / Paris</strain>
    </source>
</reference>
<evidence type="ECO:0000255" key="1">
    <source>
        <dbReference type="HAMAP-Rule" id="MF_00815"/>
    </source>
</evidence>
<dbReference type="EMBL" id="CP000786">
    <property type="protein sequence ID" value="ABZ96934.1"/>
    <property type="molecule type" value="Genomic_DNA"/>
</dbReference>
<dbReference type="RefSeq" id="WP_012387819.1">
    <property type="nucleotide sequence ID" value="NC_010602.1"/>
</dbReference>
<dbReference type="SMR" id="B0SLC7"/>
<dbReference type="STRING" id="456481.LEPBI_I0806"/>
<dbReference type="KEGG" id="lbi:LEPBI_I0806"/>
<dbReference type="HOGENOM" id="CLU_050669_0_0_12"/>
<dbReference type="OrthoDB" id="9812769at2"/>
<dbReference type="BioCyc" id="LBIF456481:LEPBI_RS03955-MONOMER"/>
<dbReference type="Proteomes" id="UP000001847">
    <property type="component" value="Chromosome I"/>
</dbReference>
<dbReference type="GO" id="GO:0005886">
    <property type="term" value="C:plasma membrane"/>
    <property type="evidence" value="ECO:0007669"/>
    <property type="project" value="UniProtKB-SubCell"/>
</dbReference>
<dbReference type="GO" id="GO:0045259">
    <property type="term" value="C:proton-transporting ATP synthase complex"/>
    <property type="evidence" value="ECO:0007669"/>
    <property type="project" value="UniProtKB-KW"/>
</dbReference>
<dbReference type="GO" id="GO:0005524">
    <property type="term" value="F:ATP binding"/>
    <property type="evidence" value="ECO:0007669"/>
    <property type="project" value="UniProtKB-UniRule"/>
</dbReference>
<dbReference type="GO" id="GO:0046933">
    <property type="term" value="F:proton-transporting ATP synthase activity, rotational mechanism"/>
    <property type="evidence" value="ECO:0007669"/>
    <property type="project" value="UniProtKB-UniRule"/>
</dbReference>
<dbReference type="GO" id="GO:0042777">
    <property type="term" value="P:proton motive force-driven plasma membrane ATP synthesis"/>
    <property type="evidence" value="ECO:0007669"/>
    <property type="project" value="UniProtKB-UniRule"/>
</dbReference>
<dbReference type="CDD" id="cd12151">
    <property type="entry name" value="F1-ATPase_gamma"/>
    <property type="match status" value="1"/>
</dbReference>
<dbReference type="FunFam" id="3.40.1380.10:FF:000006">
    <property type="entry name" value="ATP synthase gamma chain"/>
    <property type="match status" value="1"/>
</dbReference>
<dbReference type="Gene3D" id="3.40.1380.10">
    <property type="match status" value="1"/>
</dbReference>
<dbReference type="Gene3D" id="1.10.287.80">
    <property type="entry name" value="ATP synthase, gamma subunit, helix hairpin domain"/>
    <property type="match status" value="1"/>
</dbReference>
<dbReference type="HAMAP" id="MF_00815">
    <property type="entry name" value="ATP_synth_gamma_bact"/>
    <property type="match status" value="1"/>
</dbReference>
<dbReference type="InterPro" id="IPR035968">
    <property type="entry name" value="ATP_synth_F1_ATPase_gsu"/>
</dbReference>
<dbReference type="InterPro" id="IPR000131">
    <property type="entry name" value="ATP_synth_F1_gsu"/>
</dbReference>
<dbReference type="InterPro" id="IPR023632">
    <property type="entry name" value="ATP_synth_F1_gsu_CS"/>
</dbReference>
<dbReference type="NCBIfam" id="TIGR01146">
    <property type="entry name" value="ATPsyn_F1gamma"/>
    <property type="match status" value="1"/>
</dbReference>
<dbReference type="NCBIfam" id="NF009960">
    <property type="entry name" value="PRK13427.1"/>
    <property type="match status" value="1"/>
</dbReference>
<dbReference type="PANTHER" id="PTHR11693">
    <property type="entry name" value="ATP SYNTHASE GAMMA CHAIN"/>
    <property type="match status" value="1"/>
</dbReference>
<dbReference type="PANTHER" id="PTHR11693:SF22">
    <property type="entry name" value="ATP SYNTHASE SUBUNIT GAMMA, MITOCHONDRIAL"/>
    <property type="match status" value="1"/>
</dbReference>
<dbReference type="Pfam" id="PF00231">
    <property type="entry name" value="ATP-synt"/>
    <property type="match status" value="1"/>
</dbReference>
<dbReference type="PRINTS" id="PR00126">
    <property type="entry name" value="ATPASEGAMMA"/>
</dbReference>
<dbReference type="SUPFAM" id="SSF52943">
    <property type="entry name" value="ATP synthase (F1-ATPase), gamma subunit"/>
    <property type="match status" value="1"/>
</dbReference>
<dbReference type="PROSITE" id="PS00153">
    <property type="entry name" value="ATPASE_GAMMA"/>
    <property type="match status" value="1"/>
</dbReference>
<gene>
    <name evidence="1" type="primary">atpG</name>
    <name type="ordered locus">LEPBI_I0806</name>
</gene>
<accession>B0SLC7</accession>
<protein>
    <recommendedName>
        <fullName evidence="1">ATP synthase gamma chain</fullName>
    </recommendedName>
    <alternativeName>
        <fullName evidence="1">ATP synthase F1 sector gamma subunit</fullName>
    </alternativeName>
    <alternativeName>
        <fullName evidence="1">F-ATPase gamma subunit</fullName>
    </alternativeName>
</protein>
<keyword id="KW-0066">ATP synthesis</keyword>
<keyword id="KW-0997">Cell inner membrane</keyword>
<keyword id="KW-1003">Cell membrane</keyword>
<keyword id="KW-0139">CF(1)</keyword>
<keyword id="KW-0375">Hydrogen ion transport</keyword>
<keyword id="KW-0406">Ion transport</keyword>
<keyword id="KW-0472">Membrane</keyword>
<keyword id="KW-1185">Reference proteome</keyword>
<keyword id="KW-0813">Transport</keyword>
<proteinExistence type="inferred from homology"/>
<sequence>MATPREIKKRINSVKNTRKITRTMEMVSTAKAKKATNKVNAAKPYADLTRELVSSLSSLASIIHSPYLRKPDKIRKVAILAIAANRGLCGGFNSNLLRMVKNRIEELKSKGVEVEVHAAGKKAISFFKFAKVELVTSYTNIDDKAGSKEANDLASYFMERFANESVDSVEIISTHYYSAANQKPETTTVLPLQMEETGSKGSSGPEVLYEPDPKTILENLLPMVIKTTFVKIILESVASEHIARRVAMKAATDAAGEMIKLLTRGYNRVRQAKITQEISEIVGGAEAIS</sequence>